<proteinExistence type="predicted"/>
<dbReference type="EMBL" id="AL009126">
    <property type="protein sequence ID" value="CAB15695.1"/>
    <property type="molecule type" value="Genomic_DNA"/>
</dbReference>
<dbReference type="PIR" id="G70070">
    <property type="entry name" value="G70070"/>
</dbReference>
<dbReference type="RefSeq" id="NP_391559.1">
    <property type="nucleotide sequence ID" value="NC_000964.3"/>
</dbReference>
<dbReference type="RefSeq" id="WP_003227691.1">
    <property type="nucleotide sequence ID" value="NZ_OZ025638.1"/>
</dbReference>
<dbReference type="SMR" id="O32278"/>
<dbReference type="FunCoup" id="O32278">
    <property type="interactions" value="42"/>
</dbReference>
<dbReference type="STRING" id="224308.BSU36780"/>
<dbReference type="PaxDb" id="224308-BSU36780"/>
<dbReference type="EnsemblBacteria" id="CAB15695">
    <property type="protein sequence ID" value="CAB15695"/>
    <property type="gene ID" value="BSU_36780"/>
</dbReference>
<dbReference type="GeneID" id="936986"/>
<dbReference type="KEGG" id="bsu:BSU36780"/>
<dbReference type="PATRIC" id="fig|224308.179.peg.3984"/>
<dbReference type="eggNOG" id="COG4836">
    <property type="taxonomic scope" value="Bacteria"/>
</dbReference>
<dbReference type="InParanoid" id="O32278"/>
<dbReference type="OrthoDB" id="1651016at2"/>
<dbReference type="PhylomeDB" id="O32278"/>
<dbReference type="BioCyc" id="BSUB:BSU36780-MONOMER"/>
<dbReference type="Proteomes" id="UP000001570">
    <property type="component" value="Chromosome"/>
</dbReference>
<dbReference type="GO" id="GO:0005886">
    <property type="term" value="C:plasma membrane"/>
    <property type="evidence" value="ECO:0007669"/>
    <property type="project" value="UniProtKB-SubCell"/>
</dbReference>
<dbReference type="InterPro" id="IPR009526">
    <property type="entry name" value="DUF1146"/>
</dbReference>
<dbReference type="NCBIfam" id="TIGR02327">
    <property type="entry name" value="int_mem_ywzB"/>
    <property type="match status" value="1"/>
</dbReference>
<dbReference type="Pfam" id="PF06612">
    <property type="entry name" value="DUF1146"/>
    <property type="match status" value="1"/>
</dbReference>
<gene>
    <name type="primary">ywzB</name>
    <name type="ordered locus">BSU36780</name>
</gene>
<sequence length="76" mass="8459">MSVLGQQAAIGIVVHLIFIAVTWWALQAVNIDPLIKKGKVVQARLLMILLTIAIGTAVANFFLDYLNYSQQLPYLF</sequence>
<keyword id="KW-1003">Cell membrane</keyword>
<keyword id="KW-0472">Membrane</keyword>
<keyword id="KW-1185">Reference proteome</keyword>
<keyword id="KW-0812">Transmembrane</keyword>
<keyword id="KW-1133">Transmembrane helix</keyword>
<organism>
    <name type="scientific">Bacillus subtilis (strain 168)</name>
    <dbReference type="NCBI Taxonomy" id="224308"/>
    <lineage>
        <taxon>Bacteria</taxon>
        <taxon>Bacillati</taxon>
        <taxon>Bacillota</taxon>
        <taxon>Bacilli</taxon>
        <taxon>Bacillales</taxon>
        <taxon>Bacillaceae</taxon>
        <taxon>Bacillus</taxon>
    </lineage>
</organism>
<feature type="chain" id="PRO_0000389099" description="Uncharacterized membrane protein YwzB">
    <location>
        <begin position="1"/>
        <end position="76"/>
    </location>
</feature>
<feature type="transmembrane region" description="Helical" evidence="1">
    <location>
        <begin position="9"/>
        <end position="29"/>
    </location>
</feature>
<feature type="transmembrane region" description="Helical" evidence="1">
    <location>
        <begin position="45"/>
        <end position="65"/>
    </location>
</feature>
<reference key="1">
    <citation type="journal article" date="1997" name="Nature">
        <title>The complete genome sequence of the Gram-positive bacterium Bacillus subtilis.</title>
        <authorList>
            <person name="Kunst F."/>
            <person name="Ogasawara N."/>
            <person name="Moszer I."/>
            <person name="Albertini A.M."/>
            <person name="Alloni G."/>
            <person name="Azevedo V."/>
            <person name="Bertero M.G."/>
            <person name="Bessieres P."/>
            <person name="Bolotin A."/>
            <person name="Borchert S."/>
            <person name="Borriss R."/>
            <person name="Boursier L."/>
            <person name="Brans A."/>
            <person name="Braun M."/>
            <person name="Brignell S.C."/>
            <person name="Bron S."/>
            <person name="Brouillet S."/>
            <person name="Bruschi C.V."/>
            <person name="Caldwell B."/>
            <person name="Capuano V."/>
            <person name="Carter N.M."/>
            <person name="Choi S.-K."/>
            <person name="Codani J.-J."/>
            <person name="Connerton I.F."/>
            <person name="Cummings N.J."/>
            <person name="Daniel R.A."/>
            <person name="Denizot F."/>
            <person name="Devine K.M."/>
            <person name="Duesterhoeft A."/>
            <person name="Ehrlich S.D."/>
            <person name="Emmerson P.T."/>
            <person name="Entian K.-D."/>
            <person name="Errington J."/>
            <person name="Fabret C."/>
            <person name="Ferrari E."/>
            <person name="Foulger D."/>
            <person name="Fritz C."/>
            <person name="Fujita M."/>
            <person name="Fujita Y."/>
            <person name="Fuma S."/>
            <person name="Galizzi A."/>
            <person name="Galleron N."/>
            <person name="Ghim S.-Y."/>
            <person name="Glaser P."/>
            <person name="Goffeau A."/>
            <person name="Golightly E.J."/>
            <person name="Grandi G."/>
            <person name="Guiseppi G."/>
            <person name="Guy B.J."/>
            <person name="Haga K."/>
            <person name="Haiech J."/>
            <person name="Harwood C.R."/>
            <person name="Henaut A."/>
            <person name="Hilbert H."/>
            <person name="Holsappel S."/>
            <person name="Hosono S."/>
            <person name="Hullo M.-F."/>
            <person name="Itaya M."/>
            <person name="Jones L.-M."/>
            <person name="Joris B."/>
            <person name="Karamata D."/>
            <person name="Kasahara Y."/>
            <person name="Klaerr-Blanchard M."/>
            <person name="Klein C."/>
            <person name="Kobayashi Y."/>
            <person name="Koetter P."/>
            <person name="Koningstein G."/>
            <person name="Krogh S."/>
            <person name="Kumano M."/>
            <person name="Kurita K."/>
            <person name="Lapidus A."/>
            <person name="Lardinois S."/>
            <person name="Lauber J."/>
            <person name="Lazarevic V."/>
            <person name="Lee S.-M."/>
            <person name="Levine A."/>
            <person name="Liu H."/>
            <person name="Masuda S."/>
            <person name="Mauel C."/>
            <person name="Medigue C."/>
            <person name="Medina N."/>
            <person name="Mellado R.P."/>
            <person name="Mizuno M."/>
            <person name="Moestl D."/>
            <person name="Nakai S."/>
            <person name="Noback M."/>
            <person name="Noone D."/>
            <person name="O'Reilly M."/>
            <person name="Ogawa K."/>
            <person name="Ogiwara A."/>
            <person name="Oudega B."/>
            <person name="Park S.-H."/>
            <person name="Parro V."/>
            <person name="Pohl T.M."/>
            <person name="Portetelle D."/>
            <person name="Porwollik S."/>
            <person name="Prescott A.M."/>
            <person name="Presecan E."/>
            <person name="Pujic P."/>
            <person name="Purnelle B."/>
            <person name="Rapoport G."/>
            <person name="Rey M."/>
            <person name="Reynolds S."/>
            <person name="Rieger M."/>
            <person name="Rivolta C."/>
            <person name="Rocha E."/>
            <person name="Roche B."/>
            <person name="Rose M."/>
            <person name="Sadaie Y."/>
            <person name="Sato T."/>
            <person name="Scanlan E."/>
            <person name="Schleich S."/>
            <person name="Schroeter R."/>
            <person name="Scoffone F."/>
            <person name="Sekiguchi J."/>
            <person name="Sekowska A."/>
            <person name="Seror S.J."/>
            <person name="Serror P."/>
            <person name="Shin B.-S."/>
            <person name="Soldo B."/>
            <person name="Sorokin A."/>
            <person name="Tacconi E."/>
            <person name="Takagi T."/>
            <person name="Takahashi H."/>
            <person name="Takemaru K."/>
            <person name="Takeuchi M."/>
            <person name="Tamakoshi A."/>
            <person name="Tanaka T."/>
            <person name="Terpstra P."/>
            <person name="Tognoni A."/>
            <person name="Tosato V."/>
            <person name="Uchiyama S."/>
            <person name="Vandenbol M."/>
            <person name="Vannier F."/>
            <person name="Vassarotti A."/>
            <person name="Viari A."/>
            <person name="Wambutt R."/>
            <person name="Wedler E."/>
            <person name="Wedler H."/>
            <person name="Weitzenegger T."/>
            <person name="Winters P."/>
            <person name="Wipat A."/>
            <person name="Yamamoto H."/>
            <person name="Yamane K."/>
            <person name="Yasumoto K."/>
            <person name="Yata K."/>
            <person name="Yoshida K."/>
            <person name="Yoshikawa H.-F."/>
            <person name="Zumstein E."/>
            <person name="Yoshikawa H."/>
            <person name="Danchin A."/>
        </authorList>
    </citation>
    <scope>NUCLEOTIDE SEQUENCE [LARGE SCALE GENOMIC DNA]</scope>
    <source>
        <strain>168</strain>
    </source>
</reference>
<name>YWZB_BACSU</name>
<accession>O32278</accession>
<comment type="subcellular location">
    <subcellularLocation>
        <location evidence="2">Cell membrane</location>
        <topology evidence="2">Multi-pass membrane protein</topology>
    </subcellularLocation>
</comment>
<evidence type="ECO:0000255" key="1"/>
<evidence type="ECO:0000305" key="2"/>
<protein>
    <recommendedName>
        <fullName>Uncharacterized membrane protein YwzB</fullName>
    </recommendedName>
</protein>